<reference key="1">
    <citation type="journal article" date="2002" name="J. Mol. Biol.">
        <title>Bacteriophage Mu genome sequence: analysis and comparison with Mu-like prophages in Haemophilus, Neisseria and Deinococcus.</title>
        <authorList>
            <person name="Morgan G.J."/>
            <person name="Hatfull G.F."/>
            <person name="Casjens S."/>
            <person name="Hendrix R.W."/>
        </authorList>
    </citation>
    <scope>NUCLEOTIDE SEQUENCE [LARGE SCALE GENOMIC DNA]</scope>
    <scope>FUNCTION</scope>
</reference>
<reference key="2">
    <citation type="journal article" date="1996" name="Virology">
        <title>Bacteriophage Mu head assembly.</title>
        <authorList>
            <person name="Grimaud R."/>
        </authorList>
    </citation>
    <scope>FUNCTION</scope>
    <scope>SUBUNIT</scope>
    <scope>SUBCELLULAR LOCATION</scope>
    <scope>CLEAVAGE OF C-TERMINUS</scope>
</reference>
<reference key="3">
    <citation type="journal article" date="1998" name="J. Bacteriol.">
        <title>Assembly of both the head and tail of bacteriophage Mu is blocked in Escherichia coli groEL and groES mutants.</title>
        <authorList>
            <person name="Grimaud R."/>
            <person name="Toussaint A."/>
        </authorList>
    </citation>
    <scope>FUNCTION</scope>
</reference>
<reference key="4">
    <citation type="journal article" date="1993" name="Genetics">
        <title>Mutational analysis of a C-dependent late promoter of bacteriophage Mu.</title>
        <authorList>
            <person name="Chiang L.W."/>
            <person name="Howe M.M."/>
        </authorList>
    </citation>
    <scope>INDUCTION</scope>
</reference>
<organism>
    <name type="scientific">Escherichia phage Mu</name>
    <name type="common">Bacteriophage Mu</name>
    <dbReference type="NCBI Taxonomy" id="2681603"/>
    <lineage>
        <taxon>Viruses</taxon>
        <taxon>Duplodnaviria</taxon>
        <taxon>Heunggongvirae</taxon>
        <taxon>Uroviricota</taxon>
        <taxon>Caudoviricetes</taxon>
        <taxon>Muvirus</taxon>
        <taxon>Muvirus mu</taxon>
    </lineage>
</organism>
<keyword id="KW-0002">3D-structure</keyword>
<keyword id="KW-0167">Capsid protein</keyword>
<keyword id="KW-1035">Host cytoplasm</keyword>
<keyword id="KW-0426">Late protein</keyword>
<keyword id="KW-1185">Reference proteome</keyword>
<keyword id="KW-0118">Viral capsid assembly</keyword>
<keyword id="KW-1242">Viral contractile tail ejection system</keyword>
<keyword id="KW-1171">Viral genome ejection through host cell envelope</keyword>
<keyword id="KW-0231">Viral genome packaging</keyword>
<keyword id="KW-1162">Viral penetration into host cytoplasm</keyword>
<keyword id="KW-1188">Viral release from host cell</keyword>
<keyword id="KW-0946">Virion</keyword>
<keyword id="KW-1160">Virus entry into host cell</keyword>
<sequence>MGRILDISGQPFDFDDEMQSRSDELAMVMKRTQEHPSSGVTPNRAAQMLRDAERGDLTAQADLAFDMEEKDTHLFSELSKRRLAIQALEWRIAPARDASAQEKKDADMLNEYLHDAAWFEDALFDAGDAILKGYSMQEIEWGWLGKMRVPVALHHRDPALFCANPDNLNELRLRDASYHGLELQPFGWFMHRAKSRTGYVGTNGLVRTLIWPFIFKNYSVRDFAEFLEIYGLPMRVGKYPTGSTNREKATLMQAVMDIGRRAGGIIPMGMTLDFQSAADGQSDPFMAMIGWAEKAISKAILGGTLTTEAGDKGARSLGEVHDEVRREIRNADVGQLARSINRDLIYPLLALNSDSTIDINRLPGIVFDTSEAGDITALSDAIPKLAAGMRIPVSWIQEKLHIPQPVGDEAVFTIQPVVPDNGSQKEAALSAEDIPQEDDIDRMGVSPEDWQRSVDPLLKPVIFSVLKDGPEAAMNKAASLYPQMDDAELIDMLTRAIFVADIWGRLDAAADH</sequence>
<gene>
    <name type="primary">H</name>
    <name type="ordered locus">Mup29</name>
</gene>
<accession>Q9T1W5</accession>
<organismHost>
    <name type="scientific">Enterobacteriaceae</name>
    <dbReference type="NCBI Taxonomy" id="543"/>
</organismHost>
<dbReference type="EMBL" id="AF083977">
    <property type="protein sequence ID" value="AAF01107.1"/>
    <property type="molecule type" value="Genomic_DNA"/>
</dbReference>
<dbReference type="RefSeq" id="NP_050633.1">
    <property type="nucleotide sequence ID" value="NC_000929.1"/>
</dbReference>
<dbReference type="PDB" id="9KHX">
    <property type="method" value="EM"/>
    <property type="resolution" value="3.40 A"/>
    <property type="chains" value="M/N/O/P/Q/R/S/T/U/V/W/X=1-512"/>
</dbReference>
<dbReference type="PDB" id="9KNU">
    <property type="method" value="EM"/>
    <property type="resolution" value="3.60 A"/>
    <property type="chains" value="A/B/C/D/E/F/G/H/I/J/K/L=1-512"/>
</dbReference>
<dbReference type="PDBsum" id="9KHX"/>
<dbReference type="PDBsum" id="9KNU"/>
<dbReference type="EMDB" id="EMD-62358"/>
<dbReference type="EMDB" id="EMD-62462"/>
<dbReference type="SMR" id="Q9T1W5"/>
<dbReference type="TCDB" id="1.W.9.1.1">
    <property type="family name" value="the escherichia coli mu phage portal protein 9 (ppp9) family"/>
</dbReference>
<dbReference type="GeneID" id="2636304"/>
<dbReference type="KEGG" id="vg:2636304"/>
<dbReference type="Proteomes" id="UP000002611">
    <property type="component" value="Genome"/>
</dbReference>
<dbReference type="GO" id="GO:0030430">
    <property type="term" value="C:host cell cytoplasm"/>
    <property type="evidence" value="ECO:0007669"/>
    <property type="project" value="UniProtKB-SubCell"/>
</dbReference>
<dbReference type="GO" id="GO:0019028">
    <property type="term" value="C:viral capsid"/>
    <property type="evidence" value="ECO:0007669"/>
    <property type="project" value="UniProtKB-KW"/>
</dbReference>
<dbReference type="GO" id="GO:0099000">
    <property type="term" value="P:symbiont genome ejection through host cell envelope, contractile tail mechanism"/>
    <property type="evidence" value="ECO:0007669"/>
    <property type="project" value="UniProtKB-KW"/>
</dbReference>
<dbReference type="InterPro" id="IPR009279">
    <property type="entry name" value="Portal_Mu"/>
</dbReference>
<dbReference type="Pfam" id="PF06074">
    <property type="entry name" value="Portal_Mu"/>
    <property type="match status" value="1"/>
</dbReference>
<name>PORTL_BPMU</name>
<protein>
    <recommendedName>
        <fullName>Portal protein</fullName>
    </recommendedName>
    <alternativeName>
        <fullName>Gene product 29</fullName>
        <shortName>gp29</shortName>
    </alternativeName>
    <alternativeName>
        <fullName>Gene product H</fullName>
        <shortName>gpH</shortName>
    </alternativeName>
    <alternativeName>
        <fullName>Head-tail connector</fullName>
    </alternativeName>
</protein>
<evidence type="ECO:0000269" key="1">
    <source>
    </source>
</evidence>
<evidence type="ECO:0000269" key="2">
    <source>
    </source>
</evidence>
<evidence type="ECO:0000305" key="3"/>
<evidence type="ECO:0000305" key="4">
    <source>
    </source>
</evidence>
<evidence type="ECO:0000305" key="5">
    <source>
    </source>
</evidence>
<evidence type="ECO:0000305" key="6">
    <source>
    </source>
</evidence>
<feature type="chain" id="PRO_0000077824" description="Portal protein">
    <location>
        <begin position="1"/>
        <end position="512"/>
    </location>
</feature>
<proteinExistence type="evidence at protein level"/>
<comment type="function">
    <text evidence="4 5 6">Forms the portal vertex of the capsid. This portal plays critical roles in head assembly, genome packaging, neck/tail attachment, and genome ejection. The portal protein multimerizes as a single ring-shaped homododecamer arranged around a central channel. Binds to the terminase subunits to form the packaging machine. Acts as a linker between the capsid and tail. Required for attachment of the neck proteins to the capsid.</text>
</comment>
<comment type="subunit">
    <text evidence="2 3">Homododecamer (Probable). Part of the immature prohead complex. Might interact with viral I protease; this interaction gives rise to an early 25S initiator complex (Probable). The scaffolding protein Z and the capsid protein T should then be added to this initiator complex to yield the immature prohead (Probable). Host GroEL and GroES are also essential for the correct assembly of viral head and tail.</text>
</comment>
<comment type="subcellular location">
    <subcellularLocation>
        <location evidence="2">Virion</location>
    </subcellularLocation>
    <subcellularLocation>
        <location evidence="5">Host cytoplasm</location>
    </subcellularLocation>
    <text>Located at a unique 5-fold vertex of the icosahedral capsid.</text>
</comment>
<comment type="induction">
    <text evidence="1">Expressed in the late phase of the viral replicative cycle. Expression of late genes is activated by the viral late transcription activator C.</text>
</comment>
<comment type="PTM">
    <text evidence="2">Cleavage by the viral I protease yields a C-terminally cleaved portal protein competent for DNA packaging and procpasid maturation.</text>
</comment>